<name>KTHY_ECOL5</name>
<proteinExistence type="inferred from homology"/>
<dbReference type="EC" id="2.7.4.9" evidence="1"/>
<dbReference type="EMBL" id="CP000247">
    <property type="protein sequence ID" value="ABG69103.1"/>
    <property type="molecule type" value="Genomic_DNA"/>
</dbReference>
<dbReference type="RefSeq" id="WP_001257002.1">
    <property type="nucleotide sequence ID" value="NC_008253.1"/>
</dbReference>
<dbReference type="SMR" id="Q0TIX6"/>
<dbReference type="KEGG" id="ecp:ECP_1090"/>
<dbReference type="HOGENOM" id="CLU_049131_0_1_6"/>
<dbReference type="Proteomes" id="UP000009182">
    <property type="component" value="Chromosome"/>
</dbReference>
<dbReference type="GO" id="GO:0005829">
    <property type="term" value="C:cytosol"/>
    <property type="evidence" value="ECO:0007669"/>
    <property type="project" value="TreeGrafter"/>
</dbReference>
<dbReference type="GO" id="GO:0005524">
    <property type="term" value="F:ATP binding"/>
    <property type="evidence" value="ECO:0007669"/>
    <property type="project" value="UniProtKB-UniRule"/>
</dbReference>
<dbReference type="GO" id="GO:0004798">
    <property type="term" value="F:dTMP kinase activity"/>
    <property type="evidence" value="ECO:0007669"/>
    <property type="project" value="UniProtKB-UniRule"/>
</dbReference>
<dbReference type="GO" id="GO:0006233">
    <property type="term" value="P:dTDP biosynthetic process"/>
    <property type="evidence" value="ECO:0007669"/>
    <property type="project" value="InterPro"/>
</dbReference>
<dbReference type="GO" id="GO:0006235">
    <property type="term" value="P:dTTP biosynthetic process"/>
    <property type="evidence" value="ECO:0007669"/>
    <property type="project" value="UniProtKB-UniRule"/>
</dbReference>
<dbReference type="GO" id="GO:0006227">
    <property type="term" value="P:dUDP biosynthetic process"/>
    <property type="evidence" value="ECO:0007669"/>
    <property type="project" value="TreeGrafter"/>
</dbReference>
<dbReference type="CDD" id="cd01672">
    <property type="entry name" value="TMPK"/>
    <property type="match status" value="1"/>
</dbReference>
<dbReference type="FunFam" id="3.40.50.300:FF:000321">
    <property type="entry name" value="Thymidylate kinase"/>
    <property type="match status" value="1"/>
</dbReference>
<dbReference type="Gene3D" id="3.40.50.300">
    <property type="entry name" value="P-loop containing nucleotide triphosphate hydrolases"/>
    <property type="match status" value="1"/>
</dbReference>
<dbReference type="HAMAP" id="MF_00165">
    <property type="entry name" value="Thymidylate_kinase"/>
    <property type="match status" value="1"/>
</dbReference>
<dbReference type="InterPro" id="IPR027417">
    <property type="entry name" value="P-loop_NTPase"/>
</dbReference>
<dbReference type="InterPro" id="IPR039430">
    <property type="entry name" value="Thymidylate_kin-like_dom"/>
</dbReference>
<dbReference type="InterPro" id="IPR018095">
    <property type="entry name" value="Thymidylate_kin_CS"/>
</dbReference>
<dbReference type="InterPro" id="IPR018094">
    <property type="entry name" value="Thymidylate_kinase"/>
</dbReference>
<dbReference type="NCBIfam" id="TIGR00041">
    <property type="entry name" value="DTMP_kinase"/>
    <property type="match status" value="1"/>
</dbReference>
<dbReference type="PANTHER" id="PTHR10344">
    <property type="entry name" value="THYMIDYLATE KINASE"/>
    <property type="match status" value="1"/>
</dbReference>
<dbReference type="PANTHER" id="PTHR10344:SF4">
    <property type="entry name" value="UMP-CMP KINASE 2, MITOCHONDRIAL"/>
    <property type="match status" value="1"/>
</dbReference>
<dbReference type="Pfam" id="PF02223">
    <property type="entry name" value="Thymidylate_kin"/>
    <property type="match status" value="1"/>
</dbReference>
<dbReference type="SUPFAM" id="SSF52540">
    <property type="entry name" value="P-loop containing nucleoside triphosphate hydrolases"/>
    <property type="match status" value="1"/>
</dbReference>
<dbReference type="PROSITE" id="PS01331">
    <property type="entry name" value="THYMIDYLATE_KINASE"/>
    <property type="match status" value="1"/>
</dbReference>
<evidence type="ECO:0000255" key="1">
    <source>
        <dbReference type="HAMAP-Rule" id="MF_00165"/>
    </source>
</evidence>
<feature type="chain" id="PRO_1000023187" description="Thymidylate kinase">
    <location>
        <begin position="1"/>
        <end position="213"/>
    </location>
</feature>
<feature type="binding site" evidence="1">
    <location>
        <begin position="10"/>
        <end position="17"/>
    </location>
    <ligand>
        <name>ATP</name>
        <dbReference type="ChEBI" id="CHEBI:30616"/>
    </ligand>
</feature>
<protein>
    <recommendedName>
        <fullName evidence="1">Thymidylate kinase</fullName>
        <ecNumber evidence="1">2.7.4.9</ecNumber>
    </recommendedName>
    <alternativeName>
        <fullName evidence="1">dTMP kinase</fullName>
    </alternativeName>
</protein>
<reference key="1">
    <citation type="journal article" date="2006" name="Mol. Microbiol.">
        <title>Role of pathogenicity island-associated integrases in the genome plasticity of uropathogenic Escherichia coli strain 536.</title>
        <authorList>
            <person name="Hochhut B."/>
            <person name="Wilde C."/>
            <person name="Balling G."/>
            <person name="Middendorf B."/>
            <person name="Dobrindt U."/>
            <person name="Brzuszkiewicz E."/>
            <person name="Gottschalk G."/>
            <person name="Carniel E."/>
            <person name="Hacker J."/>
        </authorList>
    </citation>
    <scope>NUCLEOTIDE SEQUENCE [LARGE SCALE GENOMIC DNA]</scope>
    <source>
        <strain>536 / UPEC</strain>
    </source>
</reference>
<gene>
    <name evidence="1" type="primary">tmk</name>
    <name type="ordered locus">ECP_1090</name>
</gene>
<comment type="function">
    <text evidence="1">Phosphorylation of dTMP to form dTDP in both de novo and salvage pathways of dTTP synthesis.</text>
</comment>
<comment type="catalytic activity">
    <reaction evidence="1">
        <text>dTMP + ATP = dTDP + ADP</text>
        <dbReference type="Rhea" id="RHEA:13517"/>
        <dbReference type="ChEBI" id="CHEBI:30616"/>
        <dbReference type="ChEBI" id="CHEBI:58369"/>
        <dbReference type="ChEBI" id="CHEBI:63528"/>
        <dbReference type="ChEBI" id="CHEBI:456216"/>
        <dbReference type="EC" id="2.7.4.9"/>
    </reaction>
</comment>
<comment type="similarity">
    <text evidence="1">Belongs to the thymidylate kinase family.</text>
</comment>
<organism>
    <name type="scientific">Escherichia coli O6:K15:H31 (strain 536 / UPEC)</name>
    <dbReference type="NCBI Taxonomy" id="362663"/>
    <lineage>
        <taxon>Bacteria</taxon>
        <taxon>Pseudomonadati</taxon>
        <taxon>Pseudomonadota</taxon>
        <taxon>Gammaproteobacteria</taxon>
        <taxon>Enterobacterales</taxon>
        <taxon>Enterobacteriaceae</taxon>
        <taxon>Escherichia</taxon>
    </lineage>
</organism>
<sequence>MRSKYIVIEGLEGAGKTTARNVVVETLEQLGIRDMVFTREPGGTQLAEKLRSLVLDIKSVGDEVITDKAEVLMFYAARVQLVETVIKPALANGTWVIGDRHDLSTQAYQGGGRGIDQHMLATLRDAVLGDFRPDLTLYLDVTPEVGLKRARARGELDRIEQESFDFFNRTRARYLELAAQDKSIHTIDATQPLEAVMDAIRTTVTNWVKELDA</sequence>
<keyword id="KW-0067">ATP-binding</keyword>
<keyword id="KW-0418">Kinase</keyword>
<keyword id="KW-0545">Nucleotide biosynthesis</keyword>
<keyword id="KW-0547">Nucleotide-binding</keyword>
<keyword id="KW-0808">Transferase</keyword>
<accession>Q0TIX6</accession>